<feature type="chain" id="PRO_0000201372" description="UTP--glucose-1-phosphate uridylyltransferase 2">
    <location>
        <begin position="1"/>
        <end position="299"/>
    </location>
</feature>
<keyword id="KW-0548">Nucleotidyltransferase</keyword>
<keyword id="KW-1185">Reference proteome</keyword>
<keyword id="KW-0808">Transferase</keyword>
<accession>P67068</accession>
<accession>P58098</accession>
<accession>Q491A7</accession>
<gene>
    <name type="primary">hasC2</name>
    <name type="synonym">hasC.2</name>
    <name type="ordered locus">SPy_0224</name>
    <name type="ordered locus">M5005_Spy0192</name>
</gene>
<reference key="1">
    <citation type="journal article" date="2001" name="Proc. Natl. Acad. Sci. U.S.A.">
        <title>Complete genome sequence of an M1 strain of Streptococcus pyogenes.</title>
        <authorList>
            <person name="Ferretti J.J."/>
            <person name="McShan W.M."/>
            <person name="Ajdic D.J."/>
            <person name="Savic D.J."/>
            <person name="Savic G."/>
            <person name="Lyon K."/>
            <person name="Primeaux C."/>
            <person name="Sezate S."/>
            <person name="Suvorov A.N."/>
            <person name="Kenton S."/>
            <person name="Lai H.S."/>
            <person name="Lin S.P."/>
            <person name="Qian Y."/>
            <person name="Jia H.G."/>
            <person name="Najar F.Z."/>
            <person name="Ren Q."/>
            <person name="Zhu H."/>
            <person name="Song L."/>
            <person name="White J."/>
            <person name="Yuan X."/>
            <person name="Clifton S.W."/>
            <person name="Roe B.A."/>
            <person name="McLaughlin R.E."/>
        </authorList>
    </citation>
    <scope>NUCLEOTIDE SEQUENCE [LARGE SCALE GENOMIC DNA]</scope>
    <source>
        <strain>ATCC 700294 / SF370 / Serotype M1</strain>
    </source>
</reference>
<reference key="2">
    <citation type="journal article" date="2005" name="J. Infect. Dis.">
        <title>Evolutionary origin and emergence of a highly successful clone of serotype M1 group A Streptococcus involved multiple horizontal gene transfer events.</title>
        <authorList>
            <person name="Sumby P."/>
            <person name="Porcella S.F."/>
            <person name="Madrigal A.G."/>
            <person name="Barbian K.D."/>
            <person name="Virtaneva K."/>
            <person name="Ricklefs S.M."/>
            <person name="Sturdevant D.E."/>
            <person name="Graham M.R."/>
            <person name="Vuopio-Varkila J."/>
            <person name="Hoe N.P."/>
            <person name="Musser J.M."/>
        </authorList>
    </citation>
    <scope>NUCLEOTIDE SEQUENCE [LARGE SCALE GENOMIC DNA]</scope>
    <source>
        <strain>ATCC BAA-947 / MGAS5005 / Serotype M1</strain>
    </source>
</reference>
<name>HASC2_STRP1</name>
<evidence type="ECO:0000305" key="1"/>
<sequence>MTKVRKAIIPAAGLGTRFLPATKALAKEMLPIVDKPTIQFIVEEALKSGIEEILIVTGKSKRSIEDHFDSNFELEYNLQAKGKIELLKLVDETTSINLHFIRQSHPRGLGDAVLQAKTFVGNEPFVVMLGDDLMDITNPNVKPLTKQLIDDYEETHAATIAVMRVPHEDVSNYGIIAPQAKAVKGLYSVDTFVEKPQPQDAPSDLAIIGRYLLTPEIFSILEKQEPGAGNEVQLTDAIDTLNKTQRVFAREFKGKRYDVGDKFGFMKTSLDYALKHPQVKDDLKAYIIQLGKALEKTKP</sequence>
<dbReference type="EC" id="2.7.7.9"/>
<dbReference type="EMBL" id="AE004092">
    <property type="protein sequence ID" value="AAK33308.1"/>
    <property type="molecule type" value="Genomic_DNA"/>
</dbReference>
<dbReference type="EMBL" id="CP000017">
    <property type="protein sequence ID" value="AAZ50811.1"/>
    <property type="molecule type" value="Genomic_DNA"/>
</dbReference>
<dbReference type="RefSeq" id="NP_268587.1">
    <property type="nucleotide sequence ID" value="NC_002737.2"/>
</dbReference>
<dbReference type="SMR" id="P67068"/>
<dbReference type="PaxDb" id="1314-HKU360_00234"/>
<dbReference type="KEGG" id="spy:SPy_0224"/>
<dbReference type="KEGG" id="spz:M5005_Spy0192"/>
<dbReference type="PATRIC" id="fig|160490.10.peg.199"/>
<dbReference type="HOGENOM" id="CLU_029499_1_2_9"/>
<dbReference type="OMA" id="VTIMQTR"/>
<dbReference type="UniPathway" id="UPA00215"/>
<dbReference type="Proteomes" id="UP000000750">
    <property type="component" value="Chromosome"/>
</dbReference>
<dbReference type="GO" id="GO:0003983">
    <property type="term" value="F:UTP:glucose-1-phosphate uridylyltransferase activity"/>
    <property type="evidence" value="ECO:0007669"/>
    <property type="project" value="UniProtKB-EC"/>
</dbReference>
<dbReference type="GO" id="GO:0009058">
    <property type="term" value="P:biosynthetic process"/>
    <property type="evidence" value="ECO:0007669"/>
    <property type="project" value="InterPro"/>
</dbReference>
<dbReference type="GO" id="GO:0006011">
    <property type="term" value="P:UDP-alpha-D-glucose metabolic process"/>
    <property type="evidence" value="ECO:0007669"/>
    <property type="project" value="InterPro"/>
</dbReference>
<dbReference type="CDD" id="cd02541">
    <property type="entry name" value="UGPase_prokaryotic"/>
    <property type="match status" value="1"/>
</dbReference>
<dbReference type="Gene3D" id="3.90.550.10">
    <property type="entry name" value="Spore Coat Polysaccharide Biosynthesis Protein SpsA, Chain A"/>
    <property type="match status" value="1"/>
</dbReference>
<dbReference type="InterPro" id="IPR005771">
    <property type="entry name" value="GalU_uridylyltTrfase_bac/arc"/>
</dbReference>
<dbReference type="InterPro" id="IPR005835">
    <property type="entry name" value="NTP_transferase_dom"/>
</dbReference>
<dbReference type="InterPro" id="IPR029044">
    <property type="entry name" value="Nucleotide-diphossugar_trans"/>
</dbReference>
<dbReference type="NCBIfam" id="TIGR01099">
    <property type="entry name" value="galU"/>
    <property type="match status" value="1"/>
</dbReference>
<dbReference type="PANTHER" id="PTHR43197">
    <property type="entry name" value="UTP--GLUCOSE-1-PHOSPHATE URIDYLYLTRANSFERASE"/>
    <property type="match status" value="1"/>
</dbReference>
<dbReference type="PANTHER" id="PTHR43197:SF1">
    <property type="entry name" value="UTP--GLUCOSE-1-PHOSPHATE URIDYLYLTRANSFERASE"/>
    <property type="match status" value="1"/>
</dbReference>
<dbReference type="Pfam" id="PF00483">
    <property type="entry name" value="NTP_transferase"/>
    <property type="match status" value="1"/>
</dbReference>
<dbReference type="SUPFAM" id="SSF53448">
    <property type="entry name" value="Nucleotide-diphospho-sugar transferases"/>
    <property type="match status" value="1"/>
</dbReference>
<organism>
    <name type="scientific">Streptococcus pyogenes serotype M1</name>
    <dbReference type="NCBI Taxonomy" id="301447"/>
    <lineage>
        <taxon>Bacteria</taxon>
        <taxon>Bacillati</taxon>
        <taxon>Bacillota</taxon>
        <taxon>Bacilli</taxon>
        <taxon>Lactobacillales</taxon>
        <taxon>Streptococcaceae</taxon>
        <taxon>Streptococcus</taxon>
    </lineage>
</organism>
<protein>
    <recommendedName>
        <fullName>UTP--glucose-1-phosphate uridylyltransferase 2</fullName>
        <ecNumber>2.7.7.9</ecNumber>
    </recommendedName>
    <alternativeName>
        <fullName>Alpha-D-glucosyl-1-phosphate uridylyltransferase 2</fullName>
    </alternativeName>
    <alternativeName>
        <fullName>UDP-glucose pyrophosphorylase 2</fullName>
        <shortName>UDPGP 2</shortName>
    </alternativeName>
    <alternativeName>
        <fullName>Uridine diphosphoglucose pyrophosphorylase 2</fullName>
    </alternativeName>
</protein>
<proteinExistence type="inferred from homology"/>
<comment type="catalytic activity">
    <reaction>
        <text>alpha-D-glucose 1-phosphate + UTP + H(+) = UDP-alpha-D-glucose + diphosphate</text>
        <dbReference type="Rhea" id="RHEA:19889"/>
        <dbReference type="ChEBI" id="CHEBI:15378"/>
        <dbReference type="ChEBI" id="CHEBI:33019"/>
        <dbReference type="ChEBI" id="CHEBI:46398"/>
        <dbReference type="ChEBI" id="CHEBI:58601"/>
        <dbReference type="ChEBI" id="CHEBI:58885"/>
        <dbReference type="EC" id="2.7.7.9"/>
    </reaction>
</comment>
<comment type="pathway">
    <text>Carbohydrate metabolism; nucleotide-sugar metabolism.</text>
</comment>
<comment type="similarity">
    <text evidence="1">Belongs to the UDPGP type 2 family.</text>
</comment>